<organism>
    <name type="scientific">Idiomarina loihiensis (strain ATCC BAA-735 / DSM 15497 / L2-TR)</name>
    <dbReference type="NCBI Taxonomy" id="283942"/>
    <lineage>
        <taxon>Bacteria</taxon>
        <taxon>Pseudomonadati</taxon>
        <taxon>Pseudomonadota</taxon>
        <taxon>Gammaproteobacteria</taxon>
        <taxon>Alteromonadales</taxon>
        <taxon>Idiomarinaceae</taxon>
        <taxon>Idiomarina</taxon>
    </lineage>
</organism>
<proteinExistence type="inferred from homology"/>
<dbReference type="EC" id="1.17.7.3" evidence="1"/>
<dbReference type="EMBL" id="AE017340">
    <property type="protein sequence ID" value="AAV82866.1"/>
    <property type="molecule type" value="Genomic_DNA"/>
</dbReference>
<dbReference type="RefSeq" id="WP_011235262.1">
    <property type="nucleotide sequence ID" value="NC_006512.1"/>
</dbReference>
<dbReference type="SMR" id="Q5QYA9"/>
<dbReference type="STRING" id="283942.IL2034"/>
<dbReference type="GeneID" id="41337224"/>
<dbReference type="KEGG" id="ilo:IL2034"/>
<dbReference type="eggNOG" id="COG0821">
    <property type="taxonomic scope" value="Bacteria"/>
</dbReference>
<dbReference type="HOGENOM" id="CLU_042258_0_0_6"/>
<dbReference type="OrthoDB" id="9803214at2"/>
<dbReference type="UniPathway" id="UPA00056">
    <property type="reaction ID" value="UER00096"/>
</dbReference>
<dbReference type="Proteomes" id="UP000001171">
    <property type="component" value="Chromosome"/>
</dbReference>
<dbReference type="GO" id="GO:0051539">
    <property type="term" value="F:4 iron, 4 sulfur cluster binding"/>
    <property type="evidence" value="ECO:0007669"/>
    <property type="project" value="UniProtKB-UniRule"/>
</dbReference>
<dbReference type="GO" id="GO:0046429">
    <property type="term" value="F:4-hydroxy-3-methylbut-2-en-1-yl diphosphate synthase activity (ferredoxin)"/>
    <property type="evidence" value="ECO:0007669"/>
    <property type="project" value="UniProtKB-UniRule"/>
</dbReference>
<dbReference type="GO" id="GO:0141197">
    <property type="term" value="F:4-hydroxy-3-methylbut-2-enyl-diphosphate synthase activity (flavodoxin)"/>
    <property type="evidence" value="ECO:0007669"/>
    <property type="project" value="UniProtKB-EC"/>
</dbReference>
<dbReference type="GO" id="GO:0005506">
    <property type="term" value="F:iron ion binding"/>
    <property type="evidence" value="ECO:0007669"/>
    <property type="project" value="InterPro"/>
</dbReference>
<dbReference type="GO" id="GO:0019288">
    <property type="term" value="P:isopentenyl diphosphate biosynthetic process, methylerythritol 4-phosphate pathway"/>
    <property type="evidence" value="ECO:0007669"/>
    <property type="project" value="UniProtKB-UniRule"/>
</dbReference>
<dbReference type="GO" id="GO:0016114">
    <property type="term" value="P:terpenoid biosynthetic process"/>
    <property type="evidence" value="ECO:0007669"/>
    <property type="project" value="InterPro"/>
</dbReference>
<dbReference type="FunFam" id="3.20.20.20:FF:000001">
    <property type="entry name" value="4-hydroxy-3-methylbut-2-en-1-yl diphosphate synthase (flavodoxin)"/>
    <property type="match status" value="1"/>
</dbReference>
<dbReference type="Gene3D" id="3.20.20.20">
    <property type="entry name" value="Dihydropteroate synthase-like"/>
    <property type="match status" value="1"/>
</dbReference>
<dbReference type="Gene3D" id="3.30.413.10">
    <property type="entry name" value="Sulfite Reductase Hemoprotein, domain 1"/>
    <property type="match status" value="1"/>
</dbReference>
<dbReference type="HAMAP" id="MF_00159">
    <property type="entry name" value="IspG"/>
    <property type="match status" value="1"/>
</dbReference>
<dbReference type="InterPro" id="IPR011005">
    <property type="entry name" value="Dihydropteroate_synth-like_sf"/>
</dbReference>
<dbReference type="InterPro" id="IPR016425">
    <property type="entry name" value="IspG_bac"/>
</dbReference>
<dbReference type="InterPro" id="IPR004588">
    <property type="entry name" value="IspG_bac-typ"/>
</dbReference>
<dbReference type="InterPro" id="IPR045854">
    <property type="entry name" value="NO2/SO3_Rdtase_4Fe4S_sf"/>
</dbReference>
<dbReference type="NCBIfam" id="TIGR00612">
    <property type="entry name" value="ispG_gcpE"/>
    <property type="match status" value="1"/>
</dbReference>
<dbReference type="NCBIfam" id="NF001540">
    <property type="entry name" value="PRK00366.1"/>
    <property type="match status" value="1"/>
</dbReference>
<dbReference type="PANTHER" id="PTHR30454">
    <property type="entry name" value="4-HYDROXY-3-METHYLBUT-2-EN-1-YL DIPHOSPHATE SYNTHASE"/>
    <property type="match status" value="1"/>
</dbReference>
<dbReference type="PANTHER" id="PTHR30454:SF0">
    <property type="entry name" value="4-HYDROXY-3-METHYLBUT-2-EN-1-YL DIPHOSPHATE SYNTHASE (FERREDOXIN), CHLOROPLASTIC"/>
    <property type="match status" value="1"/>
</dbReference>
<dbReference type="Pfam" id="PF04551">
    <property type="entry name" value="GcpE"/>
    <property type="match status" value="1"/>
</dbReference>
<dbReference type="PIRSF" id="PIRSF004640">
    <property type="entry name" value="IspG"/>
    <property type="match status" value="1"/>
</dbReference>
<dbReference type="SUPFAM" id="SSF51717">
    <property type="entry name" value="Dihydropteroate synthetase-like"/>
    <property type="match status" value="1"/>
</dbReference>
<dbReference type="SUPFAM" id="SSF56014">
    <property type="entry name" value="Nitrite and sulphite reductase 4Fe-4S domain-like"/>
    <property type="match status" value="1"/>
</dbReference>
<evidence type="ECO:0000255" key="1">
    <source>
        <dbReference type="HAMAP-Rule" id="MF_00159"/>
    </source>
</evidence>
<accession>Q5QYA9</accession>
<sequence length="372" mass="40487">MMHENPIKRRPSRRLYVGNVPIGDGAPIAVQSMTNTETTDVDATVAQIEALAQAGADIVRVSVPTMEAAEAFKQIKQRSPVPLVTDIHFDYRIALKVAEYGADCLRINPGNIGHEDRIKAVVDAARERNIPIRIGVNGGSLEKDLQEKYGEPTAEALVESAMRHVNILYKLDFYDFKVSVKASDVFLAVESYRLLAQKIDQPLHLGITEAGGKRSGAVKSSVGLGMLLAEGIGDTLRVSLAADPVEEIKVGFDILKSLRIRARGINFIACPSCSRQEFDVINTVNALEERLEDITIPMDVSIIGCVVNGPGEALVSHVGLAGAKNKSGLYIGGARQKLRLDNQNLVDELEAQIREQVKFIEANKIDVKEING</sequence>
<keyword id="KW-0004">4Fe-4S</keyword>
<keyword id="KW-0408">Iron</keyword>
<keyword id="KW-0411">Iron-sulfur</keyword>
<keyword id="KW-0414">Isoprene biosynthesis</keyword>
<keyword id="KW-0479">Metal-binding</keyword>
<keyword id="KW-0560">Oxidoreductase</keyword>
<keyword id="KW-1185">Reference proteome</keyword>
<reference key="1">
    <citation type="journal article" date="2004" name="Proc. Natl. Acad. Sci. U.S.A.">
        <title>Genome sequence of the deep-sea gamma-proteobacterium Idiomarina loihiensis reveals amino acid fermentation as a source of carbon and energy.</title>
        <authorList>
            <person name="Hou S."/>
            <person name="Saw J.H."/>
            <person name="Lee K.S."/>
            <person name="Freitas T.A."/>
            <person name="Belisle C."/>
            <person name="Kawarabayasi Y."/>
            <person name="Donachie S.P."/>
            <person name="Pikina A."/>
            <person name="Galperin M.Y."/>
            <person name="Koonin E.V."/>
            <person name="Makarova K.S."/>
            <person name="Omelchenko M.V."/>
            <person name="Sorokin A."/>
            <person name="Wolf Y.I."/>
            <person name="Li Q.X."/>
            <person name="Keum Y.S."/>
            <person name="Campbell S."/>
            <person name="Denery J."/>
            <person name="Aizawa S."/>
            <person name="Shibata S."/>
            <person name="Malahoff A."/>
            <person name="Alam M."/>
        </authorList>
    </citation>
    <scope>NUCLEOTIDE SEQUENCE [LARGE SCALE GENOMIC DNA]</scope>
    <source>
        <strain>ATCC BAA-735 / DSM 15497 / L2-TR</strain>
    </source>
</reference>
<comment type="function">
    <text evidence="1">Converts 2C-methyl-D-erythritol 2,4-cyclodiphosphate (ME-2,4cPP) into 1-hydroxy-2-methyl-2-(E)-butenyl 4-diphosphate.</text>
</comment>
<comment type="catalytic activity">
    <reaction evidence="1">
        <text>(2E)-4-hydroxy-3-methylbut-2-enyl diphosphate + oxidized [flavodoxin] + H2O + 2 H(+) = 2-C-methyl-D-erythritol 2,4-cyclic diphosphate + reduced [flavodoxin]</text>
        <dbReference type="Rhea" id="RHEA:43604"/>
        <dbReference type="Rhea" id="RHEA-COMP:10622"/>
        <dbReference type="Rhea" id="RHEA-COMP:10623"/>
        <dbReference type="ChEBI" id="CHEBI:15377"/>
        <dbReference type="ChEBI" id="CHEBI:15378"/>
        <dbReference type="ChEBI" id="CHEBI:57618"/>
        <dbReference type="ChEBI" id="CHEBI:58210"/>
        <dbReference type="ChEBI" id="CHEBI:58483"/>
        <dbReference type="ChEBI" id="CHEBI:128753"/>
        <dbReference type="EC" id="1.17.7.3"/>
    </reaction>
</comment>
<comment type="cofactor">
    <cofactor evidence="1">
        <name>[4Fe-4S] cluster</name>
        <dbReference type="ChEBI" id="CHEBI:49883"/>
    </cofactor>
    <text evidence="1">Binds 1 [4Fe-4S] cluster.</text>
</comment>
<comment type="pathway">
    <text evidence="1">Isoprenoid biosynthesis; isopentenyl diphosphate biosynthesis via DXP pathway; isopentenyl diphosphate from 1-deoxy-D-xylulose 5-phosphate: step 5/6.</text>
</comment>
<comment type="similarity">
    <text evidence="1">Belongs to the IspG family.</text>
</comment>
<protein>
    <recommendedName>
        <fullName evidence="1">4-hydroxy-3-methylbut-2-en-1-yl diphosphate synthase (flavodoxin)</fullName>
        <ecNumber evidence="1">1.17.7.3</ecNumber>
    </recommendedName>
    <alternativeName>
        <fullName evidence="1">1-hydroxy-2-methyl-2-(E)-butenyl 4-diphosphate synthase</fullName>
    </alternativeName>
</protein>
<gene>
    <name evidence="1" type="primary">ispG</name>
    <name type="synonym">gcpE</name>
    <name type="ordered locus">IL2034</name>
</gene>
<name>ISPG_IDILO</name>
<feature type="chain" id="PRO_0000190589" description="4-hydroxy-3-methylbut-2-en-1-yl diphosphate synthase (flavodoxin)">
    <location>
        <begin position="1"/>
        <end position="372"/>
    </location>
</feature>
<feature type="binding site" evidence="1">
    <location>
        <position position="270"/>
    </location>
    <ligand>
        <name>[4Fe-4S] cluster</name>
        <dbReference type="ChEBI" id="CHEBI:49883"/>
    </ligand>
</feature>
<feature type="binding site" evidence="1">
    <location>
        <position position="273"/>
    </location>
    <ligand>
        <name>[4Fe-4S] cluster</name>
        <dbReference type="ChEBI" id="CHEBI:49883"/>
    </ligand>
</feature>
<feature type="binding site" evidence="1">
    <location>
        <position position="305"/>
    </location>
    <ligand>
        <name>[4Fe-4S] cluster</name>
        <dbReference type="ChEBI" id="CHEBI:49883"/>
    </ligand>
</feature>
<feature type="binding site" evidence="1">
    <location>
        <position position="312"/>
    </location>
    <ligand>
        <name>[4Fe-4S] cluster</name>
        <dbReference type="ChEBI" id="CHEBI:49883"/>
    </ligand>
</feature>